<accession>Q01Q48</accession>
<evidence type="ECO:0000255" key="1">
    <source>
        <dbReference type="HAMAP-Rule" id="MF_00033"/>
    </source>
</evidence>
<keyword id="KW-0131">Cell cycle</keyword>
<keyword id="KW-0132">Cell division</keyword>
<keyword id="KW-0997">Cell inner membrane</keyword>
<keyword id="KW-1003">Cell membrane</keyword>
<keyword id="KW-0133">Cell shape</keyword>
<keyword id="KW-0961">Cell wall biogenesis/degradation</keyword>
<keyword id="KW-0328">Glycosyltransferase</keyword>
<keyword id="KW-0472">Membrane</keyword>
<keyword id="KW-0573">Peptidoglycan synthesis</keyword>
<keyword id="KW-0808">Transferase</keyword>
<reference key="1">
    <citation type="journal article" date="2009" name="Appl. Environ. Microbiol.">
        <title>Three genomes from the phylum Acidobacteria provide insight into the lifestyles of these microorganisms in soils.</title>
        <authorList>
            <person name="Ward N.L."/>
            <person name="Challacombe J.F."/>
            <person name="Janssen P.H."/>
            <person name="Henrissat B."/>
            <person name="Coutinho P.M."/>
            <person name="Wu M."/>
            <person name="Xie G."/>
            <person name="Haft D.H."/>
            <person name="Sait M."/>
            <person name="Badger J."/>
            <person name="Barabote R.D."/>
            <person name="Bradley B."/>
            <person name="Brettin T.S."/>
            <person name="Brinkac L.M."/>
            <person name="Bruce D."/>
            <person name="Creasy T."/>
            <person name="Daugherty S.C."/>
            <person name="Davidsen T.M."/>
            <person name="DeBoy R.T."/>
            <person name="Detter J.C."/>
            <person name="Dodson R.J."/>
            <person name="Durkin A.S."/>
            <person name="Ganapathy A."/>
            <person name="Gwinn-Giglio M."/>
            <person name="Han C.S."/>
            <person name="Khouri H."/>
            <person name="Kiss H."/>
            <person name="Kothari S.P."/>
            <person name="Madupu R."/>
            <person name="Nelson K.E."/>
            <person name="Nelson W.C."/>
            <person name="Paulsen I."/>
            <person name="Penn K."/>
            <person name="Ren Q."/>
            <person name="Rosovitz M.J."/>
            <person name="Selengut J.D."/>
            <person name="Shrivastava S."/>
            <person name="Sullivan S.A."/>
            <person name="Tapia R."/>
            <person name="Thompson L.S."/>
            <person name="Watkins K.L."/>
            <person name="Yang Q."/>
            <person name="Yu C."/>
            <person name="Zafar N."/>
            <person name="Zhou L."/>
            <person name="Kuske C.R."/>
        </authorList>
    </citation>
    <scope>NUCLEOTIDE SEQUENCE [LARGE SCALE GENOMIC DNA]</scope>
    <source>
        <strain>Ellin6076</strain>
    </source>
</reference>
<sequence>MTHQQTLPTTAASFLMAGGGTGGHVIPALAVARELRSRGHKVFFVGTQHGMEARLVPPEGFEFKTIEIGGLNQVSWNQKFATLSRLPITTLKCGRSVRDASAVFSMGGYVAGPPVMAALVRRVPVVVMEPNAFPGFTNRVIARLVSRALVSFPETAAFFPKGRTEVTGLPVREEFFRIPPKARGDVLQILITGGSQGSRTLNHAARQSWPLFRNSGYPVRITHQTGTGSFQEIRDAFAQSGLEGEVVPFIADMPAAFAAADLIVCRSGAGTVSELAAAGKPSILVPFPFAADDHQTRNAQSLERAGAARLVRDAEMTGEKFFEVVTSVTGELSRMGTAARQFAKPGAAKRAADILEEVARP</sequence>
<organism>
    <name type="scientific">Solibacter usitatus (strain Ellin6076)</name>
    <dbReference type="NCBI Taxonomy" id="234267"/>
    <lineage>
        <taxon>Bacteria</taxon>
        <taxon>Pseudomonadati</taxon>
        <taxon>Acidobacteriota</taxon>
        <taxon>Terriglobia</taxon>
        <taxon>Bryobacterales</taxon>
        <taxon>Solibacteraceae</taxon>
        <taxon>Candidatus Solibacter</taxon>
    </lineage>
</organism>
<name>MURG_SOLUE</name>
<protein>
    <recommendedName>
        <fullName evidence="1">UDP-N-acetylglucosamine--N-acetylmuramyl-(pentapeptide) pyrophosphoryl-undecaprenol N-acetylglucosamine transferase</fullName>
        <ecNumber evidence="1">2.4.1.227</ecNumber>
    </recommendedName>
    <alternativeName>
        <fullName evidence="1">Undecaprenyl-PP-MurNAc-pentapeptide-UDPGlcNAc GlcNAc transferase</fullName>
    </alternativeName>
</protein>
<proteinExistence type="inferred from homology"/>
<comment type="function">
    <text evidence="1">Cell wall formation. Catalyzes the transfer of a GlcNAc subunit on undecaprenyl-pyrophosphoryl-MurNAc-pentapeptide (lipid intermediate I) to form undecaprenyl-pyrophosphoryl-MurNAc-(pentapeptide)GlcNAc (lipid intermediate II).</text>
</comment>
<comment type="catalytic activity">
    <reaction evidence="1">
        <text>di-trans,octa-cis-undecaprenyl diphospho-N-acetyl-alpha-D-muramoyl-L-alanyl-D-glutamyl-meso-2,6-diaminopimeloyl-D-alanyl-D-alanine + UDP-N-acetyl-alpha-D-glucosamine = di-trans,octa-cis-undecaprenyl diphospho-[N-acetyl-alpha-D-glucosaminyl-(1-&gt;4)]-N-acetyl-alpha-D-muramoyl-L-alanyl-D-glutamyl-meso-2,6-diaminopimeloyl-D-alanyl-D-alanine + UDP + H(+)</text>
        <dbReference type="Rhea" id="RHEA:31227"/>
        <dbReference type="ChEBI" id="CHEBI:15378"/>
        <dbReference type="ChEBI" id="CHEBI:57705"/>
        <dbReference type="ChEBI" id="CHEBI:58223"/>
        <dbReference type="ChEBI" id="CHEBI:61387"/>
        <dbReference type="ChEBI" id="CHEBI:61388"/>
        <dbReference type="EC" id="2.4.1.227"/>
    </reaction>
</comment>
<comment type="pathway">
    <text evidence="1">Cell wall biogenesis; peptidoglycan biosynthesis.</text>
</comment>
<comment type="subcellular location">
    <subcellularLocation>
        <location evidence="1">Cell inner membrane</location>
        <topology evidence="1">Peripheral membrane protein</topology>
        <orientation evidence="1">Cytoplasmic side</orientation>
    </subcellularLocation>
</comment>
<comment type="similarity">
    <text evidence="1">Belongs to the glycosyltransferase 28 family. MurG subfamily.</text>
</comment>
<gene>
    <name evidence="1" type="primary">murG</name>
    <name type="ordered locus">Acid_7311</name>
</gene>
<dbReference type="EC" id="2.4.1.227" evidence="1"/>
<dbReference type="EMBL" id="CP000473">
    <property type="protein sequence ID" value="ABJ88222.1"/>
    <property type="molecule type" value="Genomic_DNA"/>
</dbReference>
<dbReference type="SMR" id="Q01Q48"/>
<dbReference type="FunCoup" id="Q01Q48">
    <property type="interactions" value="339"/>
</dbReference>
<dbReference type="STRING" id="234267.Acid_7311"/>
<dbReference type="CAZy" id="GT28">
    <property type="family name" value="Glycosyltransferase Family 28"/>
</dbReference>
<dbReference type="KEGG" id="sus:Acid_7311"/>
<dbReference type="eggNOG" id="COG0707">
    <property type="taxonomic scope" value="Bacteria"/>
</dbReference>
<dbReference type="HOGENOM" id="CLU_037404_2_0_0"/>
<dbReference type="InParanoid" id="Q01Q48"/>
<dbReference type="OrthoDB" id="9808936at2"/>
<dbReference type="UniPathway" id="UPA00219"/>
<dbReference type="GO" id="GO:0005886">
    <property type="term" value="C:plasma membrane"/>
    <property type="evidence" value="ECO:0007669"/>
    <property type="project" value="UniProtKB-SubCell"/>
</dbReference>
<dbReference type="GO" id="GO:0051991">
    <property type="term" value="F:UDP-N-acetyl-D-glucosamine:N-acetylmuramoyl-L-alanyl-D-glutamyl-meso-2,6-diaminopimelyl-D-alanyl-D-alanine-diphosphoundecaprenol 4-beta-N-acetylglucosaminlytransferase activity"/>
    <property type="evidence" value="ECO:0007669"/>
    <property type="project" value="RHEA"/>
</dbReference>
<dbReference type="GO" id="GO:0050511">
    <property type="term" value="F:undecaprenyldiphospho-muramoylpentapeptide beta-N-acetylglucosaminyltransferase activity"/>
    <property type="evidence" value="ECO:0007669"/>
    <property type="project" value="UniProtKB-UniRule"/>
</dbReference>
<dbReference type="GO" id="GO:0005975">
    <property type="term" value="P:carbohydrate metabolic process"/>
    <property type="evidence" value="ECO:0007669"/>
    <property type="project" value="InterPro"/>
</dbReference>
<dbReference type="GO" id="GO:0051301">
    <property type="term" value="P:cell division"/>
    <property type="evidence" value="ECO:0007669"/>
    <property type="project" value="UniProtKB-KW"/>
</dbReference>
<dbReference type="GO" id="GO:0071555">
    <property type="term" value="P:cell wall organization"/>
    <property type="evidence" value="ECO:0007669"/>
    <property type="project" value="UniProtKB-KW"/>
</dbReference>
<dbReference type="GO" id="GO:0030259">
    <property type="term" value="P:lipid glycosylation"/>
    <property type="evidence" value="ECO:0007669"/>
    <property type="project" value="UniProtKB-UniRule"/>
</dbReference>
<dbReference type="GO" id="GO:0009252">
    <property type="term" value="P:peptidoglycan biosynthetic process"/>
    <property type="evidence" value="ECO:0007669"/>
    <property type="project" value="UniProtKB-UniRule"/>
</dbReference>
<dbReference type="GO" id="GO:0008360">
    <property type="term" value="P:regulation of cell shape"/>
    <property type="evidence" value="ECO:0007669"/>
    <property type="project" value="UniProtKB-KW"/>
</dbReference>
<dbReference type="CDD" id="cd03785">
    <property type="entry name" value="GT28_MurG"/>
    <property type="match status" value="1"/>
</dbReference>
<dbReference type="Gene3D" id="3.40.50.2000">
    <property type="entry name" value="Glycogen Phosphorylase B"/>
    <property type="match status" value="2"/>
</dbReference>
<dbReference type="HAMAP" id="MF_00033">
    <property type="entry name" value="MurG"/>
    <property type="match status" value="1"/>
</dbReference>
<dbReference type="InterPro" id="IPR006009">
    <property type="entry name" value="GlcNAc_MurG"/>
</dbReference>
<dbReference type="InterPro" id="IPR007235">
    <property type="entry name" value="Glyco_trans_28_C"/>
</dbReference>
<dbReference type="InterPro" id="IPR004276">
    <property type="entry name" value="GlycoTrans_28_N"/>
</dbReference>
<dbReference type="NCBIfam" id="TIGR01133">
    <property type="entry name" value="murG"/>
    <property type="match status" value="1"/>
</dbReference>
<dbReference type="PANTHER" id="PTHR21015:SF22">
    <property type="entry name" value="GLYCOSYLTRANSFERASE"/>
    <property type="match status" value="1"/>
</dbReference>
<dbReference type="PANTHER" id="PTHR21015">
    <property type="entry name" value="UDP-N-ACETYLGLUCOSAMINE--N-ACETYLMURAMYL-(PENTAPEPTIDE) PYROPHOSPHORYL-UNDECAPRENOL N-ACETYLGLUCOSAMINE TRANSFERASE 1"/>
    <property type="match status" value="1"/>
</dbReference>
<dbReference type="Pfam" id="PF04101">
    <property type="entry name" value="Glyco_tran_28_C"/>
    <property type="match status" value="1"/>
</dbReference>
<dbReference type="Pfam" id="PF03033">
    <property type="entry name" value="Glyco_transf_28"/>
    <property type="match status" value="1"/>
</dbReference>
<dbReference type="SUPFAM" id="SSF53756">
    <property type="entry name" value="UDP-Glycosyltransferase/glycogen phosphorylase"/>
    <property type="match status" value="1"/>
</dbReference>
<feature type="chain" id="PRO_0000315170" description="UDP-N-acetylglucosamine--N-acetylmuramyl-(pentapeptide) pyrophosphoryl-undecaprenol N-acetylglucosamine transferase">
    <location>
        <begin position="1"/>
        <end position="361"/>
    </location>
</feature>
<feature type="binding site" evidence="1">
    <location>
        <begin position="21"/>
        <end position="23"/>
    </location>
    <ligand>
        <name>UDP-N-acetyl-alpha-D-glucosamine</name>
        <dbReference type="ChEBI" id="CHEBI:57705"/>
    </ligand>
</feature>
<feature type="binding site" evidence="1">
    <location>
        <position position="131"/>
    </location>
    <ligand>
        <name>UDP-N-acetyl-alpha-D-glucosamine</name>
        <dbReference type="ChEBI" id="CHEBI:57705"/>
    </ligand>
</feature>
<feature type="binding site" evidence="1">
    <location>
        <position position="172"/>
    </location>
    <ligand>
        <name>UDP-N-acetyl-alpha-D-glucosamine</name>
        <dbReference type="ChEBI" id="CHEBI:57705"/>
    </ligand>
</feature>
<feature type="binding site" evidence="1">
    <location>
        <position position="195"/>
    </location>
    <ligand>
        <name>UDP-N-acetyl-alpha-D-glucosamine</name>
        <dbReference type="ChEBI" id="CHEBI:57705"/>
    </ligand>
</feature>
<feature type="binding site" evidence="1">
    <location>
        <position position="250"/>
    </location>
    <ligand>
        <name>UDP-N-acetyl-alpha-D-glucosamine</name>
        <dbReference type="ChEBI" id="CHEBI:57705"/>
    </ligand>
</feature>
<feature type="binding site" evidence="1">
    <location>
        <position position="295"/>
    </location>
    <ligand>
        <name>UDP-N-acetyl-alpha-D-glucosamine</name>
        <dbReference type="ChEBI" id="CHEBI:57705"/>
    </ligand>
</feature>